<sequence length="134" mass="14525">MFDGIGFMELLLIGILGLVVLGPERLPVAVRSLTGWIRALKRMANSVKDELEQELKIDQLHADLKKAESKGLANLSPELQESIDQLKKAAESVNRPYKVEDTSPVAPKASPDESPSVVEAKSSEATSENSSTPK</sequence>
<keyword id="KW-0997">Cell inner membrane</keyword>
<keyword id="KW-1003">Cell membrane</keyword>
<keyword id="KW-0472">Membrane</keyword>
<keyword id="KW-0653">Protein transport</keyword>
<keyword id="KW-1185">Reference proteome</keyword>
<keyword id="KW-0811">Translocation</keyword>
<keyword id="KW-0812">Transmembrane</keyword>
<keyword id="KW-1133">Transmembrane helix</keyword>
<keyword id="KW-0813">Transport</keyword>
<protein>
    <recommendedName>
        <fullName evidence="1">Sec-independent protein translocase protein TatB</fullName>
    </recommendedName>
</protein>
<evidence type="ECO:0000255" key="1">
    <source>
        <dbReference type="HAMAP-Rule" id="MF_00237"/>
    </source>
</evidence>
<evidence type="ECO:0000256" key="2">
    <source>
        <dbReference type="SAM" id="MobiDB-lite"/>
    </source>
</evidence>
<feature type="chain" id="PRO_0000301234" description="Sec-independent protein translocase protein TatB">
    <location>
        <begin position="1"/>
        <end position="134"/>
    </location>
</feature>
<feature type="transmembrane region" description="Helical" evidence="1">
    <location>
        <begin position="2"/>
        <end position="22"/>
    </location>
</feature>
<feature type="region of interest" description="Disordered" evidence="2">
    <location>
        <begin position="90"/>
        <end position="134"/>
    </location>
</feature>
<feature type="compositionally biased region" description="Polar residues" evidence="2">
    <location>
        <begin position="123"/>
        <end position="134"/>
    </location>
</feature>
<organism>
    <name type="scientific">Shewanella frigidimarina (strain NCIMB 400)</name>
    <dbReference type="NCBI Taxonomy" id="318167"/>
    <lineage>
        <taxon>Bacteria</taxon>
        <taxon>Pseudomonadati</taxon>
        <taxon>Pseudomonadota</taxon>
        <taxon>Gammaproteobacteria</taxon>
        <taxon>Alteromonadales</taxon>
        <taxon>Shewanellaceae</taxon>
        <taxon>Shewanella</taxon>
    </lineage>
</organism>
<gene>
    <name evidence="1" type="primary">tatB</name>
    <name type="ordered locus">Sfri_0471</name>
</gene>
<proteinExistence type="inferred from homology"/>
<accession>Q088I2</accession>
<dbReference type="EMBL" id="CP000447">
    <property type="protein sequence ID" value="ABI70333.1"/>
    <property type="molecule type" value="Genomic_DNA"/>
</dbReference>
<dbReference type="RefSeq" id="WP_011635960.1">
    <property type="nucleotide sequence ID" value="NC_008345.1"/>
</dbReference>
<dbReference type="SMR" id="Q088I2"/>
<dbReference type="STRING" id="318167.Sfri_0471"/>
<dbReference type="KEGG" id="sfr:Sfri_0471"/>
<dbReference type="eggNOG" id="COG1826">
    <property type="taxonomic scope" value="Bacteria"/>
</dbReference>
<dbReference type="HOGENOM" id="CLU_086034_1_0_6"/>
<dbReference type="OrthoDB" id="9816005at2"/>
<dbReference type="Proteomes" id="UP000000684">
    <property type="component" value="Chromosome"/>
</dbReference>
<dbReference type="GO" id="GO:0033281">
    <property type="term" value="C:TAT protein transport complex"/>
    <property type="evidence" value="ECO:0007669"/>
    <property type="project" value="UniProtKB-UniRule"/>
</dbReference>
<dbReference type="GO" id="GO:0008320">
    <property type="term" value="F:protein transmembrane transporter activity"/>
    <property type="evidence" value="ECO:0007669"/>
    <property type="project" value="UniProtKB-UniRule"/>
</dbReference>
<dbReference type="GO" id="GO:0043953">
    <property type="term" value="P:protein transport by the Tat complex"/>
    <property type="evidence" value="ECO:0007669"/>
    <property type="project" value="UniProtKB-UniRule"/>
</dbReference>
<dbReference type="Gene3D" id="1.20.5.3310">
    <property type="match status" value="1"/>
</dbReference>
<dbReference type="HAMAP" id="MF_00237">
    <property type="entry name" value="TatB"/>
    <property type="match status" value="1"/>
</dbReference>
<dbReference type="InterPro" id="IPR003369">
    <property type="entry name" value="TatA/B/E"/>
</dbReference>
<dbReference type="InterPro" id="IPR018448">
    <property type="entry name" value="TatB"/>
</dbReference>
<dbReference type="NCBIfam" id="TIGR01410">
    <property type="entry name" value="tatB"/>
    <property type="match status" value="1"/>
</dbReference>
<dbReference type="PANTHER" id="PTHR33162">
    <property type="entry name" value="SEC-INDEPENDENT PROTEIN TRANSLOCASE PROTEIN TATA, CHLOROPLASTIC"/>
    <property type="match status" value="1"/>
</dbReference>
<dbReference type="PANTHER" id="PTHR33162:SF1">
    <property type="entry name" value="SEC-INDEPENDENT PROTEIN TRANSLOCASE PROTEIN TATA, CHLOROPLASTIC"/>
    <property type="match status" value="1"/>
</dbReference>
<dbReference type="Pfam" id="PF02416">
    <property type="entry name" value="TatA_B_E"/>
    <property type="match status" value="1"/>
</dbReference>
<dbReference type="PRINTS" id="PR01506">
    <property type="entry name" value="TATBPROTEIN"/>
</dbReference>
<comment type="function">
    <text evidence="1">Part of the twin-arginine translocation (Tat) system that transports large folded proteins containing a characteristic twin-arginine motif in their signal peptide across membranes. Together with TatC, TatB is part of a receptor directly interacting with Tat signal peptides. TatB may form an oligomeric binding site that transiently accommodates folded Tat precursor proteins before their translocation.</text>
</comment>
<comment type="subunit">
    <text evidence="1">The Tat system comprises two distinct complexes: a TatABC complex, containing multiple copies of TatA, TatB and TatC subunits, and a separate TatA complex, containing only TatA subunits. Substrates initially bind to the TatABC complex, which probably triggers association of the separate TatA complex to form the active translocon.</text>
</comment>
<comment type="subcellular location">
    <subcellularLocation>
        <location evidence="1">Cell inner membrane</location>
        <topology evidence="1">Single-pass membrane protein</topology>
    </subcellularLocation>
</comment>
<comment type="similarity">
    <text evidence="1">Belongs to the TatB family.</text>
</comment>
<name>TATB_SHEFN</name>
<reference key="1">
    <citation type="submission" date="2006-08" db="EMBL/GenBank/DDBJ databases">
        <title>Complete sequence of Shewanella frigidimarina NCIMB 400.</title>
        <authorList>
            <consortium name="US DOE Joint Genome Institute"/>
            <person name="Copeland A."/>
            <person name="Lucas S."/>
            <person name="Lapidus A."/>
            <person name="Barry K."/>
            <person name="Detter J.C."/>
            <person name="Glavina del Rio T."/>
            <person name="Hammon N."/>
            <person name="Israni S."/>
            <person name="Dalin E."/>
            <person name="Tice H."/>
            <person name="Pitluck S."/>
            <person name="Fredrickson J.K."/>
            <person name="Kolker E."/>
            <person name="McCuel L.A."/>
            <person name="DiChristina T."/>
            <person name="Nealson K.H."/>
            <person name="Newman D."/>
            <person name="Tiedje J.M."/>
            <person name="Zhou J."/>
            <person name="Romine M.F."/>
            <person name="Culley D.E."/>
            <person name="Serres M."/>
            <person name="Chertkov O."/>
            <person name="Brettin T."/>
            <person name="Bruce D."/>
            <person name="Han C."/>
            <person name="Tapia R."/>
            <person name="Gilna P."/>
            <person name="Schmutz J."/>
            <person name="Larimer F."/>
            <person name="Land M."/>
            <person name="Hauser L."/>
            <person name="Kyrpides N."/>
            <person name="Mikhailova N."/>
            <person name="Richardson P."/>
        </authorList>
    </citation>
    <scope>NUCLEOTIDE SEQUENCE [LARGE SCALE GENOMIC DNA]</scope>
    <source>
        <strain>NCIMB 400</strain>
    </source>
</reference>